<organism>
    <name type="scientific">Paracoccus denitrificans (strain Pd 1222)</name>
    <dbReference type="NCBI Taxonomy" id="318586"/>
    <lineage>
        <taxon>Bacteria</taxon>
        <taxon>Pseudomonadati</taxon>
        <taxon>Pseudomonadota</taxon>
        <taxon>Alphaproteobacteria</taxon>
        <taxon>Rhodobacterales</taxon>
        <taxon>Paracoccaceae</taxon>
        <taxon>Paracoccus</taxon>
    </lineage>
</organism>
<gene>
    <name evidence="1" type="primary">ihfB</name>
    <name evidence="1" type="synonym">himD</name>
    <name type="ordered locus">Pden_3787</name>
</gene>
<evidence type="ECO:0000255" key="1">
    <source>
        <dbReference type="HAMAP-Rule" id="MF_00381"/>
    </source>
</evidence>
<proteinExistence type="inferred from homology"/>
<protein>
    <recommendedName>
        <fullName evidence="1">Integration host factor subunit beta</fullName>
        <shortName evidence="1">IHF-beta</shortName>
    </recommendedName>
</protein>
<feature type="chain" id="PRO_1000060625" description="Integration host factor subunit beta">
    <location>
        <begin position="1"/>
        <end position="95"/>
    </location>
</feature>
<keyword id="KW-0233">DNA recombination</keyword>
<keyword id="KW-0238">DNA-binding</keyword>
<keyword id="KW-1185">Reference proteome</keyword>
<keyword id="KW-0804">Transcription</keyword>
<keyword id="KW-0805">Transcription regulation</keyword>
<keyword id="KW-0810">Translation regulation</keyword>
<dbReference type="EMBL" id="CP000490">
    <property type="protein sequence ID" value="ABL71853.1"/>
    <property type="molecule type" value="Genomic_DNA"/>
</dbReference>
<dbReference type="RefSeq" id="WP_011750022.1">
    <property type="nucleotide sequence ID" value="NC_008687.1"/>
</dbReference>
<dbReference type="SMR" id="A1B8K9"/>
<dbReference type="STRING" id="318586.Pden_3787"/>
<dbReference type="EnsemblBacteria" id="ABL71853">
    <property type="protein sequence ID" value="ABL71853"/>
    <property type="gene ID" value="Pden_3787"/>
</dbReference>
<dbReference type="GeneID" id="93453449"/>
<dbReference type="KEGG" id="pde:Pden_3787"/>
<dbReference type="eggNOG" id="COG0776">
    <property type="taxonomic scope" value="Bacteria"/>
</dbReference>
<dbReference type="HOGENOM" id="CLU_105066_2_0_5"/>
<dbReference type="OrthoDB" id="9804203at2"/>
<dbReference type="Proteomes" id="UP000000361">
    <property type="component" value="Chromosome 2"/>
</dbReference>
<dbReference type="GO" id="GO:0005694">
    <property type="term" value="C:chromosome"/>
    <property type="evidence" value="ECO:0007669"/>
    <property type="project" value="InterPro"/>
</dbReference>
<dbReference type="GO" id="GO:0005829">
    <property type="term" value="C:cytosol"/>
    <property type="evidence" value="ECO:0007669"/>
    <property type="project" value="TreeGrafter"/>
</dbReference>
<dbReference type="GO" id="GO:0003677">
    <property type="term" value="F:DNA binding"/>
    <property type="evidence" value="ECO:0007669"/>
    <property type="project" value="UniProtKB-UniRule"/>
</dbReference>
<dbReference type="GO" id="GO:0030527">
    <property type="term" value="F:structural constituent of chromatin"/>
    <property type="evidence" value="ECO:0007669"/>
    <property type="project" value="InterPro"/>
</dbReference>
<dbReference type="GO" id="GO:0006310">
    <property type="term" value="P:DNA recombination"/>
    <property type="evidence" value="ECO:0007669"/>
    <property type="project" value="UniProtKB-UniRule"/>
</dbReference>
<dbReference type="GO" id="GO:0006355">
    <property type="term" value="P:regulation of DNA-templated transcription"/>
    <property type="evidence" value="ECO:0007669"/>
    <property type="project" value="UniProtKB-UniRule"/>
</dbReference>
<dbReference type="GO" id="GO:0006417">
    <property type="term" value="P:regulation of translation"/>
    <property type="evidence" value="ECO:0007669"/>
    <property type="project" value="UniProtKB-UniRule"/>
</dbReference>
<dbReference type="CDD" id="cd13836">
    <property type="entry name" value="IHF_B"/>
    <property type="match status" value="1"/>
</dbReference>
<dbReference type="Gene3D" id="4.10.520.10">
    <property type="entry name" value="IHF-like DNA-binding proteins"/>
    <property type="match status" value="1"/>
</dbReference>
<dbReference type="HAMAP" id="MF_00381">
    <property type="entry name" value="IHF_beta"/>
    <property type="match status" value="1"/>
</dbReference>
<dbReference type="InterPro" id="IPR000119">
    <property type="entry name" value="Hist_DNA-bd"/>
</dbReference>
<dbReference type="InterPro" id="IPR020816">
    <property type="entry name" value="Histone-like_DNA-bd_CS"/>
</dbReference>
<dbReference type="InterPro" id="IPR010992">
    <property type="entry name" value="IHF-like_DNA-bd_dom_sf"/>
</dbReference>
<dbReference type="InterPro" id="IPR005685">
    <property type="entry name" value="IHF_beta"/>
</dbReference>
<dbReference type="NCBIfam" id="TIGR00988">
    <property type="entry name" value="hip"/>
    <property type="match status" value="1"/>
</dbReference>
<dbReference type="NCBIfam" id="NF001222">
    <property type="entry name" value="PRK00199.1"/>
    <property type="match status" value="1"/>
</dbReference>
<dbReference type="PANTHER" id="PTHR33175">
    <property type="entry name" value="DNA-BINDING PROTEIN HU"/>
    <property type="match status" value="1"/>
</dbReference>
<dbReference type="PANTHER" id="PTHR33175:SF5">
    <property type="entry name" value="INTEGRATION HOST FACTOR SUBUNIT BETA"/>
    <property type="match status" value="1"/>
</dbReference>
<dbReference type="Pfam" id="PF00216">
    <property type="entry name" value="Bac_DNA_binding"/>
    <property type="match status" value="1"/>
</dbReference>
<dbReference type="PRINTS" id="PR01727">
    <property type="entry name" value="DNABINDINGHU"/>
</dbReference>
<dbReference type="SMART" id="SM00411">
    <property type="entry name" value="BHL"/>
    <property type="match status" value="1"/>
</dbReference>
<dbReference type="SUPFAM" id="SSF47729">
    <property type="entry name" value="IHF-like DNA-binding proteins"/>
    <property type="match status" value="1"/>
</dbReference>
<dbReference type="PROSITE" id="PS00045">
    <property type="entry name" value="HISTONE_LIKE"/>
    <property type="match status" value="1"/>
</dbReference>
<comment type="function">
    <text evidence="1">This protein is one of the two subunits of integration host factor, a specific DNA-binding protein that functions in genetic recombination as well as in transcriptional and translational control.</text>
</comment>
<comment type="subunit">
    <text evidence="1">Heterodimer of an alpha and a beta chain.</text>
</comment>
<comment type="similarity">
    <text evidence="1">Belongs to the bacterial histone-like protein family.</text>
</comment>
<reference key="1">
    <citation type="submission" date="2006-12" db="EMBL/GenBank/DDBJ databases">
        <title>Complete sequence of chromosome 2 of Paracoccus denitrificans PD1222.</title>
        <authorList>
            <person name="Copeland A."/>
            <person name="Lucas S."/>
            <person name="Lapidus A."/>
            <person name="Barry K."/>
            <person name="Detter J.C."/>
            <person name="Glavina del Rio T."/>
            <person name="Hammon N."/>
            <person name="Israni S."/>
            <person name="Dalin E."/>
            <person name="Tice H."/>
            <person name="Pitluck S."/>
            <person name="Munk A.C."/>
            <person name="Brettin T."/>
            <person name="Bruce D."/>
            <person name="Han C."/>
            <person name="Tapia R."/>
            <person name="Gilna P."/>
            <person name="Schmutz J."/>
            <person name="Larimer F."/>
            <person name="Land M."/>
            <person name="Hauser L."/>
            <person name="Kyrpides N."/>
            <person name="Lykidis A."/>
            <person name="Spiro S."/>
            <person name="Richardson D.J."/>
            <person name="Moir J.W.B."/>
            <person name="Ferguson S.J."/>
            <person name="van Spanning R.J.M."/>
            <person name="Richardson P."/>
        </authorList>
    </citation>
    <scope>NUCLEOTIDE SEQUENCE [LARGE SCALE GENOMIC DNA]</scope>
    <source>
        <strain>Pd 1222</strain>
    </source>
</reference>
<sequence>MIRSELIQKISEENPHLFQRDVERIVNTVFEEIIDAMARGDRVELRGFGAFSVKKRDARQGRNPRTGETVSVDEKHVPFFKTGKLLRERLNGLDE</sequence>
<name>IHFB_PARDP</name>
<accession>A1B8K9</accession>